<name>Y1443_STAAN</name>
<dbReference type="EMBL" id="BA000018">
    <property type="protein sequence ID" value="BAB42707.1"/>
    <property type="molecule type" value="Genomic_DNA"/>
</dbReference>
<dbReference type="PIR" id="F89943">
    <property type="entry name" value="F89943"/>
</dbReference>
<dbReference type="RefSeq" id="WP_000134779.1">
    <property type="nucleotide sequence ID" value="NC_002745.2"/>
</dbReference>
<dbReference type="EnsemblBacteria" id="BAB42707">
    <property type="protein sequence ID" value="BAB42707"/>
    <property type="gene ID" value="BAB42707"/>
</dbReference>
<dbReference type="KEGG" id="sau:SA1443"/>
<dbReference type="HOGENOM" id="CLU_146610_2_1_9"/>
<dbReference type="HAMAP" id="MF_01448">
    <property type="entry name" value="UPF0473"/>
    <property type="match status" value="1"/>
</dbReference>
<dbReference type="InterPro" id="IPR009711">
    <property type="entry name" value="UPF0473"/>
</dbReference>
<dbReference type="NCBIfam" id="NF010214">
    <property type="entry name" value="PRK13678.1-1"/>
    <property type="match status" value="1"/>
</dbReference>
<dbReference type="PANTHER" id="PTHR40066">
    <property type="entry name" value="UPF0473 PROTEIN CBO2561/CLC_2432"/>
    <property type="match status" value="1"/>
</dbReference>
<dbReference type="PANTHER" id="PTHR40066:SF1">
    <property type="entry name" value="UPF0473 PROTEIN CBO2561_CLC_2432"/>
    <property type="match status" value="1"/>
</dbReference>
<dbReference type="Pfam" id="PF06949">
    <property type="entry name" value="DUF1292"/>
    <property type="match status" value="1"/>
</dbReference>
<comment type="similarity">
    <text evidence="1">Belongs to the UPF0473 family.</text>
</comment>
<reference key="1">
    <citation type="journal article" date="2001" name="Lancet">
        <title>Whole genome sequencing of meticillin-resistant Staphylococcus aureus.</title>
        <authorList>
            <person name="Kuroda M."/>
            <person name="Ohta T."/>
            <person name="Uchiyama I."/>
            <person name="Baba T."/>
            <person name="Yuzawa H."/>
            <person name="Kobayashi I."/>
            <person name="Cui L."/>
            <person name="Oguchi A."/>
            <person name="Aoki K."/>
            <person name="Nagai Y."/>
            <person name="Lian J.-Q."/>
            <person name="Ito T."/>
            <person name="Kanamori M."/>
            <person name="Matsumaru H."/>
            <person name="Maruyama A."/>
            <person name="Murakami H."/>
            <person name="Hosoyama A."/>
            <person name="Mizutani-Ui Y."/>
            <person name="Takahashi N.K."/>
            <person name="Sawano T."/>
            <person name="Inoue R."/>
            <person name="Kaito C."/>
            <person name="Sekimizu K."/>
            <person name="Hirakawa H."/>
            <person name="Kuhara S."/>
            <person name="Goto S."/>
            <person name="Yabuzaki J."/>
            <person name="Kanehisa M."/>
            <person name="Yamashita A."/>
            <person name="Oshima K."/>
            <person name="Furuya K."/>
            <person name="Yoshino C."/>
            <person name="Shiba T."/>
            <person name="Hattori M."/>
            <person name="Ogasawara N."/>
            <person name="Hayashi H."/>
            <person name="Hiramatsu K."/>
        </authorList>
    </citation>
    <scope>NUCLEOTIDE SEQUENCE [LARGE SCALE GENOMIC DNA]</scope>
    <source>
        <strain>N315</strain>
    </source>
</reference>
<reference key="2">
    <citation type="submission" date="2005-11" db="UniProtKB">
        <title>Shotgun proteomic analysis of total protein extract of S. aureus S30 versus N315.</title>
        <authorList>
            <person name="Stenz L."/>
        </authorList>
    </citation>
    <scope>IDENTIFICATION BY MASS SPECTROMETRY</scope>
</reference>
<reference key="3">
    <citation type="submission" date="2007-10" db="UniProtKB">
        <title>Shotgun proteomic analysis of total and membrane protein extracts of S. aureus strain N315.</title>
        <authorList>
            <person name="Vaezzadeh A.R."/>
            <person name="Deshusses J."/>
            <person name="Lescuyer P."/>
            <person name="Hochstrasser D.F."/>
        </authorList>
    </citation>
    <scope>IDENTIFICATION BY MASS SPECTROMETRY [LARGE SCALE ANALYSIS]</scope>
    <source>
        <strain>N315</strain>
    </source>
</reference>
<feature type="chain" id="PRO_0000299292" description="UPF0473 protein SA1443">
    <location>
        <begin position="1"/>
        <end position="102"/>
    </location>
</feature>
<sequence length="102" mass="11949">MTEHNHDSQLEINNEEELLTLFDEEGNEVLYRKVLEFYHPEFKKEYVILAEEGAQSDEDDMIELVPMINEPDESGDGGKLVPIETDEEWDMIEEVVNTEMEE</sequence>
<organism>
    <name type="scientific">Staphylococcus aureus (strain N315)</name>
    <dbReference type="NCBI Taxonomy" id="158879"/>
    <lineage>
        <taxon>Bacteria</taxon>
        <taxon>Bacillati</taxon>
        <taxon>Bacillota</taxon>
        <taxon>Bacilli</taxon>
        <taxon>Bacillales</taxon>
        <taxon>Staphylococcaceae</taxon>
        <taxon>Staphylococcus</taxon>
    </lineage>
</organism>
<evidence type="ECO:0000305" key="1"/>
<proteinExistence type="evidence at protein level"/>
<accession>Q7A598</accession>
<protein>
    <recommendedName>
        <fullName>UPF0473 protein SA1443</fullName>
    </recommendedName>
</protein>
<gene>
    <name type="ordered locus">SA1443</name>
</gene>